<proteinExistence type="inferred from homology"/>
<protein>
    <recommendedName>
        <fullName evidence="1">Glutamyl-tRNA(Gln) amidotransferase subunit A</fullName>
        <shortName evidence="1">Glu-ADT subunit A</shortName>
        <ecNumber evidence="1">6.3.5.7</ecNumber>
    </recommendedName>
</protein>
<comment type="function">
    <text evidence="1">Allows the formation of correctly charged Gln-tRNA(Gln) through the transamidation of misacylated Glu-tRNA(Gln) in organisms which lack glutaminyl-tRNA synthetase. The reaction takes place in the presence of glutamine and ATP through an activated gamma-phospho-Glu-tRNA(Gln).</text>
</comment>
<comment type="catalytic activity">
    <reaction evidence="1">
        <text>L-glutamyl-tRNA(Gln) + L-glutamine + ATP + H2O = L-glutaminyl-tRNA(Gln) + L-glutamate + ADP + phosphate + H(+)</text>
        <dbReference type="Rhea" id="RHEA:17521"/>
        <dbReference type="Rhea" id="RHEA-COMP:9681"/>
        <dbReference type="Rhea" id="RHEA-COMP:9684"/>
        <dbReference type="ChEBI" id="CHEBI:15377"/>
        <dbReference type="ChEBI" id="CHEBI:15378"/>
        <dbReference type="ChEBI" id="CHEBI:29985"/>
        <dbReference type="ChEBI" id="CHEBI:30616"/>
        <dbReference type="ChEBI" id="CHEBI:43474"/>
        <dbReference type="ChEBI" id="CHEBI:58359"/>
        <dbReference type="ChEBI" id="CHEBI:78520"/>
        <dbReference type="ChEBI" id="CHEBI:78521"/>
        <dbReference type="ChEBI" id="CHEBI:456216"/>
        <dbReference type="EC" id="6.3.5.7"/>
    </reaction>
</comment>
<comment type="subunit">
    <text evidence="1">Heterotrimer of A, B and C subunits.</text>
</comment>
<comment type="similarity">
    <text evidence="1">Belongs to the amidase family. GatA subfamily.</text>
</comment>
<dbReference type="EC" id="6.3.5.7" evidence="1"/>
<dbReference type="EMBL" id="CP000233">
    <property type="protein sequence ID" value="ABE00150.1"/>
    <property type="molecule type" value="Genomic_DNA"/>
</dbReference>
<dbReference type="RefSeq" id="WP_011476296.1">
    <property type="nucleotide sequence ID" value="NC_007929.1"/>
</dbReference>
<dbReference type="RefSeq" id="YP_536233.1">
    <property type="nucleotide sequence ID" value="NC_007929.1"/>
</dbReference>
<dbReference type="SMR" id="Q1WSH9"/>
<dbReference type="STRING" id="362948.LSL_1345"/>
<dbReference type="KEGG" id="lsl:LSL_1345"/>
<dbReference type="PATRIC" id="fig|362948.14.peg.1420"/>
<dbReference type="HOGENOM" id="CLU_009600_0_3_9"/>
<dbReference type="OrthoDB" id="9811471at2"/>
<dbReference type="Proteomes" id="UP000006559">
    <property type="component" value="Chromosome"/>
</dbReference>
<dbReference type="GO" id="GO:0030956">
    <property type="term" value="C:glutamyl-tRNA(Gln) amidotransferase complex"/>
    <property type="evidence" value="ECO:0007669"/>
    <property type="project" value="InterPro"/>
</dbReference>
<dbReference type="GO" id="GO:0005524">
    <property type="term" value="F:ATP binding"/>
    <property type="evidence" value="ECO:0007669"/>
    <property type="project" value="UniProtKB-KW"/>
</dbReference>
<dbReference type="GO" id="GO:0050567">
    <property type="term" value="F:glutaminyl-tRNA synthase (glutamine-hydrolyzing) activity"/>
    <property type="evidence" value="ECO:0007669"/>
    <property type="project" value="UniProtKB-UniRule"/>
</dbReference>
<dbReference type="GO" id="GO:0006412">
    <property type="term" value="P:translation"/>
    <property type="evidence" value="ECO:0007669"/>
    <property type="project" value="UniProtKB-UniRule"/>
</dbReference>
<dbReference type="Gene3D" id="3.90.1300.10">
    <property type="entry name" value="Amidase signature (AS) domain"/>
    <property type="match status" value="1"/>
</dbReference>
<dbReference type="HAMAP" id="MF_00120">
    <property type="entry name" value="GatA"/>
    <property type="match status" value="1"/>
</dbReference>
<dbReference type="InterPro" id="IPR000120">
    <property type="entry name" value="Amidase"/>
</dbReference>
<dbReference type="InterPro" id="IPR020556">
    <property type="entry name" value="Amidase_CS"/>
</dbReference>
<dbReference type="InterPro" id="IPR023631">
    <property type="entry name" value="Amidase_dom"/>
</dbReference>
<dbReference type="InterPro" id="IPR036928">
    <property type="entry name" value="AS_sf"/>
</dbReference>
<dbReference type="InterPro" id="IPR004412">
    <property type="entry name" value="GatA"/>
</dbReference>
<dbReference type="NCBIfam" id="TIGR00132">
    <property type="entry name" value="gatA"/>
    <property type="match status" value="1"/>
</dbReference>
<dbReference type="PANTHER" id="PTHR11895:SF151">
    <property type="entry name" value="GLUTAMYL-TRNA(GLN) AMIDOTRANSFERASE SUBUNIT A"/>
    <property type="match status" value="1"/>
</dbReference>
<dbReference type="PANTHER" id="PTHR11895">
    <property type="entry name" value="TRANSAMIDASE"/>
    <property type="match status" value="1"/>
</dbReference>
<dbReference type="Pfam" id="PF01425">
    <property type="entry name" value="Amidase"/>
    <property type="match status" value="1"/>
</dbReference>
<dbReference type="SUPFAM" id="SSF75304">
    <property type="entry name" value="Amidase signature (AS) enzymes"/>
    <property type="match status" value="1"/>
</dbReference>
<dbReference type="PROSITE" id="PS00571">
    <property type="entry name" value="AMIDASES"/>
    <property type="match status" value="1"/>
</dbReference>
<sequence>MDYFKNDLASIHDDLVNKKYSVEELTKSTFDNIKKVDKEIEAFLKLDEERALEKARKIDERGVKADSILDGIGIGIKDNIVTKDLTTTAASKMLENFEPIYNATVMDKLNDAGMITVGKLNMDEFAMGSSTENSAFKITKNVWDTTKVPGGSSGGSAAAVASGQVLASLGSDTGGSIRQPAAFNGIVGVKPTYGRVSRYGLIAFASSLDQIGPLTRTVKDNALVLNAISGHDAHDFTSSSREVPDFTKGIEDGVKGMRIAVPKEYFGEGVDEDVAKAVKDAVKTFESLGATVDEISLPHSKYGVPVYYIIASSEASSNLQRYDGIRYGFRAKDVKNLEDVYVRSRSEGFGDEVKRRIMLGTFSLSAGSYDAFFKKAAQVRTLICQDFENVYKDYDLILAPTSPTTAYGIGEEINDPVTMYMNDILTIPVNLAGLPGMSLPAGFSNGLPIGLQLIAPRFAESTMYRAGYAFEQSTDFHKAIPTLGGQN</sequence>
<feature type="chain" id="PRO_1000015850" description="Glutamyl-tRNA(Gln) amidotransferase subunit A">
    <location>
        <begin position="1"/>
        <end position="487"/>
    </location>
</feature>
<feature type="active site" description="Charge relay system" evidence="1">
    <location>
        <position position="77"/>
    </location>
</feature>
<feature type="active site" description="Charge relay system" evidence="1">
    <location>
        <position position="152"/>
    </location>
</feature>
<feature type="active site" description="Acyl-ester intermediate" evidence="1">
    <location>
        <position position="176"/>
    </location>
</feature>
<keyword id="KW-0067">ATP-binding</keyword>
<keyword id="KW-0436">Ligase</keyword>
<keyword id="KW-0547">Nucleotide-binding</keyword>
<keyword id="KW-0648">Protein biosynthesis</keyword>
<keyword id="KW-1185">Reference proteome</keyword>
<evidence type="ECO:0000255" key="1">
    <source>
        <dbReference type="HAMAP-Rule" id="MF_00120"/>
    </source>
</evidence>
<gene>
    <name evidence="1" type="primary">gatA</name>
    <name type="ordered locus">LSL_1345</name>
</gene>
<organism>
    <name type="scientific">Ligilactobacillus salivarius (strain UCC118)</name>
    <name type="common">Lactobacillus salivarius</name>
    <dbReference type="NCBI Taxonomy" id="362948"/>
    <lineage>
        <taxon>Bacteria</taxon>
        <taxon>Bacillati</taxon>
        <taxon>Bacillota</taxon>
        <taxon>Bacilli</taxon>
        <taxon>Lactobacillales</taxon>
        <taxon>Lactobacillaceae</taxon>
        <taxon>Ligilactobacillus</taxon>
    </lineage>
</organism>
<reference key="1">
    <citation type="journal article" date="2006" name="Proc. Natl. Acad. Sci. U.S.A.">
        <title>Multireplicon genome architecture of Lactobacillus salivarius.</title>
        <authorList>
            <person name="Claesson M.J."/>
            <person name="Li Y."/>
            <person name="Leahy S."/>
            <person name="Canchaya C."/>
            <person name="van Pijkeren J.P."/>
            <person name="Cerdeno-Tarraga A.M."/>
            <person name="Parkhill J."/>
            <person name="Flynn S."/>
            <person name="O'Sullivan G.C."/>
            <person name="Collins J.K."/>
            <person name="Higgins D."/>
            <person name="Shanahan F."/>
            <person name="Fitzgerald G.F."/>
            <person name="van Sinderen D."/>
            <person name="O'Toole P.W."/>
        </authorList>
    </citation>
    <scope>NUCLEOTIDE SEQUENCE [LARGE SCALE GENOMIC DNA]</scope>
    <source>
        <strain>UCC118</strain>
    </source>
</reference>
<accession>Q1WSH9</accession>
<name>GATA_LIGS1</name>